<evidence type="ECO:0000255" key="1">
    <source>
        <dbReference type="HAMAP-Rule" id="MF_03137"/>
    </source>
</evidence>
<evidence type="ECO:0000305" key="2"/>
<name>GUF1_THEAN</name>
<comment type="function">
    <text evidence="1">Promotes mitochondrial protein synthesis. May act as a fidelity factor of the translation reaction, by catalyzing a one-codon backward translocation of tRNAs on improperly translocated ribosomes. Binds to mitochondrial ribosomes in a GTP-dependent manner.</text>
</comment>
<comment type="catalytic activity">
    <reaction evidence="1">
        <text>GTP + H2O = GDP + phosphate + H(+)</text>
        <dbReference type="Rhea" id="RHEA:19669"/>
        <dbReference type="ChEBI" id="CHEBI:15377"/>
        <dbReference type="ChEBI" id="CHEBI:15378"/>
        <dbReference type="ChEBI" id="CHEBI:37565"/>
        <dbReference type="ChEBI" id="CHEBI:43474"/>
        <dbReference type="ChEBI" id="CHEBI:58189"/>
    </reaction>
</comment>
<comment type="subcellular location">
    <subcellularLocation>
        <location evidence="1">Mitochondrion inner membrane</location>
        <topology evidence="1">Peripheral membrane protein</topology>
        <orientation evidence="1">Matrix side</orientation>
    </subcellularLocation>
</comment>
<comment type="miscellaneous">
    <text evidence="1">This protein may be expected to contain an N-terminal transit peptide but none has been predicted.</text>
</comment>
<comment type="similarity">
    <text evidence="2">Belongs to the TRAFAC class translation factor GTPase superfamily. Classic translation factor GTPase family. LepA subfamily.</text>
</comment>
<feature type="chain" id="PRO_0000402856" description="Translation factor GUF1 homolog, mitochondrial">
    <location>
        <begin position="1"/>
        <end position="730"/>
    </location>
</feature>
<feature type="domain" description="tr-type G">
    <location>
        <begin position="106"/>
        <end position="289"/>
    </location>
</feature>
<feature type="binding site" evidence="1">
    <location>
        <begin position="115"/>
        <end position="122"/>
    </location>
    <ligand>
        <name>GTP</name>
        <dbReference type="ChEBI" id="CHEBI:37565"/>
    </ligand>
</feature>
<feature type="binding site" evidence="1">
    <location>
        <begin position="182"/>
        <end position="186"/>
    </location>
    <ligand>
        <name>GTP</name>
        <dbReference type="ChEBI" id="CHEBI:37565"/>
    </ligand>
</feature>
<feature type="binding site" evidence="1">
    <location>
        <begin position="236"/>
        <end position="239"/>
    </location>
    <ligand>
        <name>GTP</name>
        <dbReference type="ChEBI" id="CHEBI:37565"/>
    </ligand>
</feature>
<protein>
    <recommendedName>
        <fullName evidence="1">Translation factor GUF1 homolog, mitochondrial</fullName>
        <ecNumber>3.6.5.-</ecNumber>
    </recommendedName>
    <alternativeName>
        <fullName evidence="1">Elongation factor 4 homolog</fullName>
        <shortName evidence="1">EF-4</shortName>
    </alternativeName>
    <alternativeName>
        <fullName evidence="1">GTPase GUF1 homolog</fullName>
    </alternativeName>
    <alternativeName>
        <fullName evidence="1">Ribosomal back-translocase</fullName>
    </alternativeName>
</protein>
<accession>Q4UIN6</accession>
<proteinExistence type="inferred from homology"/>
<gene>
    <name type="ORF">TA16990</name>
</gene>
<dbReference type="EC" id="3.6.5.-"/>
<dbReference type="EMBL" id="CR940347">
    <property type="protein sequence ID" value="CAI73053.1"/>
    <property type="molecule type" value="Genomic_DNA"/>
</dbReference>
<dbReference type="RefSeq" id="XP_953731.1">
    <property type="nucleotide sequence ID" value="XM_948638.1"/>
</dbReference>
<dbReference type="SMR" id="Q4UIN6"/>
<dbReference type="FunCoup" id="Q4UIN6">
    <property type="interactions" value="206"/>
</dbReference>
<dbReference type="STRING" id="5874.Q4UIN6"/>
<dbReference type="GeneID" id="3864426"/>
<dbReference type="KEGG" id="tan:TA16990"/>
<dbReference type="VEuPathDB" id="PiroplasmaDB:TA16990"/>
<dbReference type="eggNOG" id="KOG0462">
    <property type="taxonomic scope" value="Eukaryota"/>
</dbReference>
<dbReference type="InParanoid" id="Q4UIN6"/>
<dbReference type="OMA" id="EYSFVGY"/>
<dbReference type="OrthoDB" id="1074at2759"/>
<dbReference type="Proteomes" id="UP000001950">
    <property type="component" value="Chromosome 1 part 1"/>
</dbReference>
<dbReference type="GO" id="GO:0005743">
    <property type="term" value="C:mitochondrial inner membrane"/>
    <property type="evidence" value="ECO:0007669"/>
    <property type="project" value="UniProtKB-SubCell"/>
</dbReference>
<dbReference type="GO" id="GO:0005759">
    <property type="term" value="C:mitochondrial matrix"/>
    <property type="evidence" value="ECO:0007669"/>
    <property type="project" value="UniProtKB-UniRule"/>
</dbReference>
<dbReference type="GO" id="GO:0005525">
    <property type="term" value="F:GTP binding"/>
    <property type="evidence" value="ECO:0007669"/>
    <property type="project" value="UniProtKB-UniRule"/>
</dbReference>
<dbReference type="GO" id="GO:0003924">
    <property type="term" value="F:GTPase activity"/>
    <property type="evidence" value="ECO:0007669"/>
    <property type="project" value="UniProtKB-UniRule"/>
</dbReference>
<dbReference type="GO" id="GO:0043022">
    <property type="term" value="F:ribosome binding"/>
    <property type="evidence" value="ECO:0007669"/>
    <property type="project" value="UniProtKB-UniRule"/>
</dbReference>
<dbReference type="GO" id="GO:0045727">
    <property type="term" value="P:positive regulation of translation"/>
    <property type="evidence" value="ECO:0007669"/>
    <property type="project" value="UniProtKB-UniRule"/>
</dbReference>
<dbReference type="GO" id="GO:0006412">
    <property type="term" value="P:translation"/>
    <property type="evidence" value="ECO:0007669"/>
    <property type="project" value="UniProtKB-KW"/>
</dbReference>
<dbReference type="CDD" id="cd03699">
    <property type="entry name" value="EF4_II"/>
    <property type="match status" value="1"/>
</dbReference>
<dbReference type="CDD" id="cd16260">
    <property type="entry name" value="EF4_III"/>
    <property type="match status" value="1"/>
</dbReference>
<dbReference type="CDD" id="cd01890">
    <property type="entry name" value="LepA"/>
    <property type="match status" value="1"/>
</dbReference>
<dbReference type="Gene3D" id="3.30.70.240">
    <property type="match status" value="1"/>
</dbReference>
<dbReference type="Gene3D" id="3.30.70.2570">
    <property type="entry name" value="Elongation factor 4, C-terminal domain"/>
    <property type="match status" value="1"/>
</dbReference>
<dbReference type="Gene3D" id="3.30.70.870">
    <property type="entry name" value="Elongation Factor G (Translational Gtpase), domain 3"/>
    <property type="match status" value="1"/>
</dbReference>
<dbReference type="Gene3D" id="3.40.50.300">
    <property type="entry name" value="P-loop containing nucleotide triphosphate hydrolases"/>
    <property type="match status" value="1"/>
</dbReference>
<dbReference type="Gene3D" id="2.40.30.10">
    <property type="entry name" value="Translation factors"/>
    <property type="match status" value="1"/>
</dbReference>
<dbReference type="HAMAP" id="MF_00071">
    <property type="entry name" value="LepA"/>
    <property type="match status" value="1"/>
</dbReference>
<dbReference type="InterPro" id="IPR006297">
    <property type="entry name" value="EF-4"/>
</dbReference>
<dbReference type="InterPro" id="IPR041095">
    <property type="entry name" value="EFG_II"/>
</dbReference>
<dbReference type="InterPro" id="IPR035647">
    <property type="entry name" value="EFG_III/V"/>
</dbReference>
<dbReference type="InterPro" id="IPR000640">
    <property type="entry name" value="EFG_V-like"/>
</dbReference>
<dbReference type="InterPro" id="IPR031157">
    <property type="entry name" value="G_TR_CS"/>
</dbReference>
<dbReference type="InterPro" id="IPR038363">
    <property type="entry name" value="LepA_C_sf"/>
</dbReference>
<dbReference type="InterPro" id="IPR013842">
    <property type="entry name" value="LepA_CTD"/>
</dbReference>
<dbReference type="InterPro" id="IPR027417">
    <property type="entry name" value="P-loop_NTPase"/>
</dbReference>
<dbReference type="InterPro" id="IPR005225">
    <property type="entry name" value="Small_GTP-bd"/>
</dbReference>
<dbReference type="InterPro" id="IPR000795">
    <property type="entry name" value="T_Tr_GTP-bd_dom"/>
</dbReference>
<dbReference type="InterPro" id="IPR009000">
    <property type="entry name" value="Transl_B-barrel_sf"/>
</dbReference>
<dbReference type="NCBIfam" id="TIGR01393">
    <property type="entry name" value="lepA"/>
    <property type="match status" value="1"/>
</dbReference>
<dbReference type="NCBIfam" id="TIGR00231">
    <property type="entry name" value="small_GTP"/>
    <property type="match status" value="1"/>
</dbReference>
<dbReference type="PANTHER" id="PTHR43512:SF4">
    <property type="entry name" value="TRANSLATION FACTOR GUF1 HOMOLOG, CHLOROPLASTIC"/>
    <property type="match status" value="1"/>
</dbReference>
<dbReference type="PANTHER" id="PTHR43512">
    <property type="entry name" value="TRANSLATION FACTOR GUF1-RELATED"/>
    <property type="match status" value="1"/>
</dbReference>
<dbReference type="Pfam" id="PF00679">
    <property type="entry name" value="EFG_C"/>
    <property type="match status" value="1"/>
</dbReference>
<dbReference type="Pfam" id="PF14492">
    <property type="entry name" value="EFG_III"/>
    <property type="match status" value="1"/>
</dbReference>
<dbReference type="Pfam" id="PF00009">
    <property type="entry name" value="GTP_EFTU"/>
    <property type="match status" value="1"/>
</dbReference>
<dbReference type="Pfam" id="PF06421">
    <property type="entry name" value="LepA_C"/>
    <property type="match status" value="1"/>
</dbReference>
<dbReference type="PRINTS" id="PR00315">
    <property type="entry name" value="ELONGATNFCT"/>
</dbReference>
<dbReference type="SUPFAM" id="SSF54980">
    <property type="entry name" value="EF-G C-terminal domain-like"/>
    <property type="match status" value="2"/>
</dbReference>
<dbReference type="SUPFAM" id="SSF52540">
    <property type="entry name" value="P-loop containing nucleoside triphosphate hydrolases"/>
    <property type="match status" value="1"/>
</dbReference>
<dbReference type="SUPFAM" id="SSF50447">
    <property type="entry name" value="Translation proteins"/>
    <property type="match status" value="1"/>
</dbReference>
<dbReference type="PROSITE" id="PS00301">
    <property type="entry name" value="G_TR_1"/>
    <property type="match status" value="1"/>
</dbReference>
<dbReference type="PROSITE" id="PS51722">
    <property type="entry name" value="G_TR_2"/>
    <property type="match status" value="1"/>
</dbReference>
<keyword id="KW-0342">GTP-binding</keyword>
<keyword id="KW-0378">Hydrolase</keyword>
<keyword id="KW-0472">Membrane</keyword>
<keyword id="KW-0496">Mitochondrion</keyword>
<keyword id="KW-0999">Mitochondrion inner membrane</keyword>
<keyword id="KW-0547">Nucleotide-binding</keyword>
<keyword id="KW-0648">Protein biosynthesis</keyword>
<keyword id="KW-1185">Reference proteome</keyword>
<reference key="1">
    <citation type="journal article" date="2005" name="Science">
        <title>Genome of the host-cell transforming parasite Theileria annulata compared with T. parva.</title>
        <authorList>
            <person name="Pain A."/>
            <person name="Renauld H."/>
            <person name="Berriman M."/>
            <person name="Murphy L."/>
            <person name="Yeats C.A."/>
            <person name="Weir W."/>
            <person name="Kerhornou A."/>
            <person name="Aslett M."/>
            <person name="Bishop R."/>
            <person name="Bouchier C."/>
            <person name="Cochet M."/>
            <person name="Coulson R.M.R."/>
            <person name="Cronin A."/>
            <person name="de Villiers E.P."/>
            <person name="Fraser A."/>
            <person name="Fosker N."/>
            <person name="Gardner M."/>
            <person name="Goble A."/>
            <person name="Griffiths-Jones S."/>
            <person name="Harris D.E."/>
            <person name="Katzer F."/>
            <person name="Larke N."/>
            <person name="Lord A."/>
            <person name="Maser P."/>
            <person name="McKellar S."/>
            <person name="Mooney P."/>
            <person name="Morton F."/>
            <person name="Nene V."/>
            <person name="O'Neil S."/>
            <person name="Price C."/>
            <person name="Quail M.A."/>
            <person name="Rabbinowitsch E."/>
            <person name="Rawlings N.D."/>
            <person name="Rutter S."/>
            <person name="Saunders D."/>
            <person name="Seeger K."/>
            <person name="Shah T."/>
            <person name="Squares R."/>
            <person name="Squares S."/>
            <person name="Tivey A."/>
            <person name="Walker A.R."/>
            <person name="Woodward J."/>
            <person name="Dobbelaere D.A.E."/>
            <person name="Langsley G."/>
            <person name="Rajandream M.A."/>
            <person name="McKeever D."/>
            <person name="Shiels B."/>
            <person name="Tait A."/>
            <person name="Barrell B.G."/>
            <person name="Hall N."/>
        </authorList>
    </citation>
    <scope>NUCLEOTIDE SEQUENCE [LARGE SCALE GENOMIC DNA]</scope>
    <source>
        <strain>Ankara</strain>
    </source>
</reference>
<sequence length="730" mass="82377">MLYKYLFIYIVTKISLSSSLYHNFCTINNTNGSNFNVFDTNNGRFLNKNNRIRNILNKNINKKSSFSFINGNSLKNFKNDHKYHDFTKFTKIPEFLEEDNEPIVSELIRNFCIIAHVDHGKSTLADRFLEFTKSVPPERLKEQYLDNMELERERGITIKLQSARIKYNSILDGKTYTLNLIDTPGHIDFNHEARRSISACEGAILVVDGTKGIEAQTVTTANIAIEKGLKIIPVVNKIDLEHCDFKSTAESLKKFFGFKESDILKASAKKGIGIEDILEAVVVSIPPPKVDLEKPFRALVFDSFYDPYRGAICYIRVCCVFRLYFQVFEGSTKIGDEITLMNADITSKVTGLGIMLPEMKQTHSLQLVNSSGQVGWITAGIKKTNEIHVGDTISLKSYVKKNLVEPINKFENSKPTVFAGIYPCIGGDFDKLQTALEKLKLNDHSFQFERSDSSMVGMGFKCGFNGLLHLDITVERLEREFDTQVIVTSPSVPYRCTLRDKSVVTVDDASKWPDESQIKSSEEPWTDVTLRVPEEYFLSFINIILSSVGSVMSMLSKMRGRFKEKNKVKDTNMVVMNYDLPLSEILSDFFNKLKSVTNGYGSYDYEGTFYEPIELCKLKILLNGTEAKGLAVVTPRNRAYDRGKLIVETLVNLIPSRQFKVPVQAVIGKRVISSSNIPAVKKNVIEKCSGGDPSRKKKLLENQARVLLVLINDVIGKETNGSGRMCNNPF</sequence>
<organism>
    <name type="scientific">Theileria annulata</name>
    <dbReference type="NCBI Taxonomy" id="5874"/>
    <lineage>
        <taxon>Eukaryota</taxon>
        <taxon>Sar</taxon>
        <taxon>Alveolata</taxon>
        <taxon>Apicomplexa</taxon>
        <taxon>Aconoidasida</taxon>
        <taxon>Piroplasmida</taxon>
        <taxon>Theileriidae</taxon>
        <taxon>Theileria</taxon>
    </lineage>
</organism>